<comment type="function">
    <text evidence="1">Catalyzes the hydrolysis of N(2)-succinylarginine into N(2)-succinylornithine, ammonia and CO(2).</text>
</comment>
<comment type="catalytic activity">
    <reaction evidence="1">
        <text>N(2)-succinyl-L-arginine + 2 H2O + 2 H(+) = N(2)-succinyl-L-ornithine + 2 NH4(+) + CO2</text>
        <dbReference type="Rhea" id="RHEA:19533"/>
        <dbReference type="ChEBI" id="CHEBI:15377"/>
        <dbReference type="ChEBI" id="CHEBI:15378"/>
        <dbReference type="ChEBI" id="CHEBI:16526"/>
        <dbReference type="ChEBI" id="CHEBI:28938"/>
        <dbReference type="ChEBI" id="CHEBI:58241"/>
        <dbReference type="ChEBI" id="CHEBI:58514"/>
        <dbReference type="EC" id="3.5.3.23"/>
    </reaction>
</comment>
<comment type="pathway">
    <text evidence="1">Amino-acid degradation; L-arginine degradation via AST pathway; L-glutamate and succinate from L-arginine: step 2/5.</text>
</comment>
<comment type="subunit">
    <text evidence="1">Homodimer.</text>
</comment>
<comment type="similarity">
    <text evidence="1">Belongs to the succinylarginine dihydrolase family.</text>
</comment>
<reference key="1">
    <citation type="journal article" date="2007" name="Genes Dev.">
        <title>New insights into Acinetobacter baumannii pathogenesis revealed by high-density pyrosequencing and transposon mutagenesis.</title>
        <authorList>
            <person name="Smith M.G."/>
            <person name="Gianoulis T.A."/>
            <person name="Pukatzki S."/>
            <person name="Mekalanos J.J."/>
            <person name="Ornston L.N."/>
            <person name="Gerstein M."/>
            <person name="Snyder M."/>
        </authorList>
    </citation>
    <scope>NUCLEOTIDE SEQUENCE [LARGE SCALE GENOMIC DNA]</scope>
    <source>
        <strain>ATCC 17978 / DSM 105126 / CIP 53.77 / LMG 1025 / NCDC KC755 / 5377</strain>
    </source>
</reference>
<organism>
    <name type="scientific">Acinetobacter baumannii (strain ATCC 17978 / DSM 105126 / CIP 53.77 / LMG 1025 / NCDC KC755 / 5377)</name>
    <dbReference type="NCBI Taxonomy" id="400667"/>
    <lineage>
        <taxon>Bacteria</taxon>
        <taxon>Pseudomonadati</taxon>
        <taxon>Pseudomonadota</taxon>
        <taxon>Gammaproteobacteria</taxon>
        <taxon>Moraxellales</taxon>
        <taxon>Moraxellaceae</taxon>
        <taxon>Acinetobacter</taxon>
        <taxon>Acinetobacter calcoaceticus/baumannii complex</taxon>
    </lineage>
</organism>
<accession>A3M9D2</accession>
<proteinExistence type="inferred from homology"/>
<keyword id="KW-0056">Arginine metabolism</keyword>
<keyword id="KW-0378">Hydrolase</keyword>
<name>ASTB_ACIBT</name>
<protein>
    <recommendedName>
        <fullName evidence="1">N-succinylarginine dihydrolase</fullName>
        <ecNumber evidence="1">3.5.3.23</ecNumber>
    </recommendedName>
</protein>
<gene>
    <name evidence="1" type="primary">astB</name>
    <name type="ordered locus">A1S_3129</name>
</gene>
<evidence type="ECO:0000255" key="1">
    <source>
        <dbReference type="HAMAP-Rule" id="MF_01172"/>
    </source>
</evidence>
<sequence>MKGYEVNFDGLVGPTHHYAGLSFGNEASTKNRNNLSNPKLAAKQGLLKMKALADMGMKQGVLAPHERPHVPMLRRLGFTGDDISVVAQAMRYSPELLSSLSSASPMWTANAATVSPSADSQDERVHFTAANLNNKFHRSIEAETTSQVLQAIFKNERHFVHHEALPQVALFGDEGAANHNRLGGDYAKRGVQVFVYGQQHLNNGLPGPKRYPARQTREASEAIARLHRLDEAHTVFVQQNPDVIDQGVFHNDVIAVSNQQVLFHHQHAFLNQDQAFAEIRQKMASIGEDFISIEVPENRVTVDDAVATYLFNSQILTRPDGGMTIVVPEESRQNAAVWSYLNDMIQMGTPIDAIQVYDLRESMRNGGGPACLRLRVALNETELNAVNPKVLMNDQLFMTLNQWVDKHYRDRLAQEDLADPHLLMESRMALDELTKILGLGSVYPFQK</sequence>
<feature type="chain" id="PRO_1000137999" description="N-succinylarginine dihydrolase">
    <location>
        <begin position="1"/>
        <end position="447"/>
    </location>
</feature>
<feature type="active site" evidence="1">
    <location>
        <position position="174"/>
    </location>
</feature>
<feature type="active site" evidence="1">
    <location>
        <position position="250"/>
    </location>
</feature>
<feature type="active site" description="Nucleophile" evidence="1">
    <location>
        <position position="371"/>
    </location>
</feature>
<feature type="binding site" evidence="1">
    <location>
        <begin position="19"/>
        <end position="28"/>
    </location>
    <ligand>
        <name>substrate</name>
    </ligand>
</feature>
<feature type="binding site" evidence="1">
    <location>
        <position position="110"/>
    </location>
    <ligand>
        <name>substrate</name>
    </ligand>
</feature>
<feature type="binding site" evidence="1">
    <location>
        <begin position="137"/>
        <end position="138"/>
    </location>
    <ligand>
        <name>substrate</name>
    </ligand>
</feature>
<feature type="binding site" evidence="1">
    <location>
        <position position="214"/>
    </location>
    <ligand>
        <name>substrate</name>
    </ligand>
</feature>
<feature type="binding site" evidence="1">
    <location>
        <position position="252"/>
    </location>
    <ligand>
        <name>substrate</name>
    </ligand>
</feature>
<feature type="binding site" evidence="1">
    <location>
        <position position="365"/>
    </location>
    <ligand>
        <name>substrate</name>
    </ligand>
</feature>
<dbReference type="EC" id="3.5.3.23" evidence="1"/>
<dbReference type="EMBL" id="CP000521">
    <property type="protein sequence ID" value="ABO13526.2"/>
    <property type="molecule type" value="Genomic_DNA"/>
</dbReference>
<dbReference type="RefSeq" id="WP_000679450.1">
    <property type="nucleotide sequence ID" value="NZ_CP053098.1"/>
</dbReference>
<dbReference type="SMR" id="A3M9D2"/>
<dbReference type="GeneID" id="92895367"/>
<dbReference type="KEGG" id="acb:A1S_3129"/>
<dbReference type="HOGENOM" id="CLU_053835_0_0_6"/>
<dbReference type="UniPathway" id="UPA00185">
    <property type="reaction ID" value="UER00280"/>
</dbReference>
<dbReference type="GO" id="GO:0009015">
    <property type="term" value="F:N-succinylarginine dihydrolase activity"/>
    <property type="evidence" value="ECO:0007669"/>
    <property type="project" value="UniProtKB-UniRule"/>
</dbReference>
<dbReference type="GO" id="GO:0019544">
    <property type="term" value="P:arginine catabolic process to glutamate"/>
    <property type="evidence" value="ECO:0007669"/>
    <property type="project" value="UniProtKB-UniRule"/>
</dbReference>
<dbReference type="GO" id="GO:0019545">
    <property type="term" value="P:arginine catabolic process to succinate"/>
    <property type="evidence" value="ECO:0007669"/>
    <property type="project" value="UniProtKB-UniRule"/>
</dbReference>
<dbReference type="Gene3D" id="3.75.10.20">
    <property type="entry name" value="Succinylarginine dihydrolase"/>
    <property type="match status" value="1"/>
</dbReference>
<dbReference type="HAMAP" id="MF_01172">
    <property type="entry name" value="AstB"/>
    <property type="match status" value="1"/>
</dbReference>
<dbReference type="InterPro" id="IPR037031">
    <property type="entry name" value="AstB_sf"/>
</dbReference>
<dbReference type="InterPro" id="IPR007079">
    <property type="entry name" value="SuccinylArg_d-Hdrlase_AstB"/>
</dbReference>
<dbReference type="NCBIfam" id="TIGR03241">
    <property type="entry name" value="arg_catab_astB"/>
    <property type="match status" value="1"/>
</dbReference>
<dbReference type="NCBIfam" id="NF009789">
    <property type="entry name" value="PRK13281.1"/>
    <property type="match status" value="1"/>
</dbReference>
<dbReference type="PANTHER" id="PTHR30420">
    <property type="entry name" value="N-SUCCINYLARGININE DIHYDROLASE"/>
    <property type="match status" value="1"/>
</dbReference>
<dbReference type="PANTHER" id="PTHR30420:SF2">
    <property type="entry name" value="N-SUCCINYLARGININE DIHYDROLASE"/>
    <property type="match status" value="1"/>
</dbReference>
<dbReference type="Pfam" id="PF04996">
    <property type="entry name" value="AstB"/>
    <property type="match status" value="1"/>
</dbReference>
<dbReference type="SUPFAM" id="SSF55909">
    <property type="entry name" value="Pentein"/>
    <property type="match status" value="1"/>
</dbReference>